<protein>
    <recommendedName>
        <fullName evidence="1">Large ribosomal subunit protein uL13</fullName>
    </recommendedName>
    <alternativeName>
        <fullName evidence="2">50S ribosomal protein L13</fullName>
    </alternativeName>
</protein>
<proteinExistence type="inferred from homology"/>
<reference key="1">
    <citation type="journal article" date="2006" name="BMC Genomics">
        <title>The genome of the square archaeon Haloquadratum walsbyi: life at the limits of water activity.</title>
        <authorList>
            <person name="Bolhuis H."/>
            <person name="Palm P."/>
            <person name="Wende A."/>
            <person name="Falb M."/>
            <person name="Rampp M."/>
            <person name="Rodriguez-Valera F."/>
            <person name="Pfeiffer F."/>
            <person name="Oesterhelt D."/>
        </authorList>
    </citation>
    <scope>NUCLEOTIDE SEQUENCE [LARGE SCALE GENOMIC DNA]</scope>
    <source>
        <strain>DSM 16790 / HBSQ001</strain>
    </source>
</reference>
<gene>
    <name evidence="1" type="primary">rpl13</name>
    <name type="ordered locus">HQ_2939A</name>
</gene>
<sequence length="145" mass="15532">MSLAEFDADVVINAQNCIVGRVASEVAQRALGGETVAIVNVEDAVITGSEEDVMSVYETRSELGSDQGPAYPSRPDGIFKRAVRGMLPYKSDRGREALSNVRTYVGNPYDDDGEAIDGTTLDRLSNIKFLSLGEVSANLGATVTW</sequence>
<comment type="function">
    <text evidence="1">This protein is one of the early assembly proteins of the 50S ribosomal subunit, although it is not seen to bind rRNA by itself. It is important during the early stages of 50S assembly.</text>
</comment>
<comment type="subunit">
    <text evidence="1">Part of the 50S ribosomal subunit.</text>
</comment>
<comment type="similarity">
    <text evidence="1">Belongs to the universal ribosomal protein uL13 family.</text>
</comment>
<feature type="chain" id="PRO_0000261836" description="Large ribosomal subunit protein uL13">
    <location>
        <begin position="1"/>
        <end position="145"/>
    </location>
</feature>
<keyword id="KW-1185">Reference proteome</keyword>
<keyword id="KW-0687">Ribonucleoprotein</keyword>
<keyword id="KW-0689">Ribosomal protein</keyword>
<accession>Q18G58</accession>
<dbReference type="EMBL" id="AM180088">
    <property type="protein sequence ID" value="CAJ53043.1"/>
    <property type="molecule type" value="Genomic_DNA"/>
</dbReference>
<dbReference type="RefSeq" id="WP_011572153.1">
    <property type="nucleotide sequence ID" value="NC_008212.1"/>
</dbReference>
<dbReference type="SMR" id="Q18G58"/>
<dbReference type="STRING" id="362976.HQ_2939A"/>
<dbReference type="GeneID" id="4194603"/>
<dbReference type="KEGG" id="hwa:HQ_2939A"/>
<dbReference type="eggNOG" id="arCOG04242">
    <property type="taxonomic scope" value="Archaea"/>
</dbReference>
<dbReference type="HOGENOM" id="CLU_076922_1_0_2"/>
<dbReference type="Proteomes" id="UP000001975">
    <property type="component" value="Chromosome"/>
</dbReference>
<dbReference type="GO" id="GO:0022625">
    <property type="term" value="C:cytosolic large ribosomal subunit"/>
    <property type="evidence" value="ECO:0007669"/>
    <property type="project" value="TreeGrafter"/>
</dbReference>
<dbReference type="GO" id="GO:0003729">
    <property type="term" value="F:mRNA binding"/>
    <property type="evidence" value="ECO:0007669"/>
    <property type="project" value="TreeGrafter"/>
</dbReference>
<dbReference type="GO" id="GO:0003735">
    <property type="term" value="F:structural constituent of ribosome"/>
    <property type="evidence" value="ECO:0007669"/>
    <property type="project" value="InterPro"/>
</dbReference>
<dbReference type="GO" id="GO:0017148">
    <property type="term" value="P:negative regulation of translation"/>
    <property type="evidence" value="ECO:0007669"/>
    <property type="project" value="TreeGrafter"/>
</dbReference>
<dbReference type="GO" id="GO:0006412">
    <property type="term" value="P:translation"/>
    <property type="evidence" value="ECO:0007669"/>
    <property type="project" value="UniProtKB-UniRule"/>
</dbReference>
<dbReference type="CDD" id="cd00392">
    <property type="entry name" value="Ribosomal_L13"/>
    <property type="match status" value="1"/>
</dbReference>
<dbReference type="Gene3D" id="3.90.1180.10">
    <property type="entry name" value="Ribosomal protein L13"/>
    <property type="match status" value="1"/>
</dbReference>
<dbReference type="HAMAP" id="MF_01366">
    <property type="entry name" value="Ribosomal_uL13"/>
    <property type="match status" value="1"/>
</dbReference>
<dbReference type="InterPro" id="IPR005822">
    <property type="entry name" value="Ribosomal_uL13"/>
</dbReference>
<dbReference type="InterPro" id="IPR005823">
    <property type="entry name" value="Ribosomal_uL13_bac-type"/>
</dbReference>
<dbReference type="InterPro" id="IPR005755">
    <property type="entry name" value="Ribosomal_uL13_euk/arc"/>
</dbReference>
<dbReference type="InterPro" id="IPR036899">
    <property type="entry name" value="Ribosomal_uL13_sf"/>
</dbReference>
<dbReference type="NCBIfam" id="TIGR01077">
    <property type="entry name" value="L13_A_E"/>
    <property type="match status" value="1"/>
</dbReference>
<dbReference type="NCBIfam" id="NF005004">
    <property type="entry name" value="PRK06394.1"/>
    <property type="match status" value="1"/>
</dbReference>
<dbReference type="PANTHER" id="PTHR11545:SF3">
    <property type="entry name" value="LARGE RIBOSOMAL SUBUNIT PROTEIN UL13"/>
    <property type="match status" value="1"/>
</dbReference>
<dbReference type="PANTHER" id="PTHR11545">
    <property type="entry name" value="RIBOSOMAL PROTEIN L13"/>
    <property type="match status" value="1"/>
</dbReference>
<dbReference type="Pfam" id="PF00572">
    <property type="entry name" value="Ribosomal_L13"/>
    <property type="match status" value="1"/>
</dbReference>
<dbReference type="PIRSF" id="PIRSF002181">
    <property type="entry name" value="Ribosomal_L13"/>
    <property type="match status" value="1"/>
</dbReference>
<dbReference type="SUPFAM" id="SSF52161">
    <property type="entry name" value="Ribosomal protein L13"/>
    <property type="match status" value="1"/>
</dbReference>
<evidence type="ECO:0000255" key="1">
    <source>
        <dbReference type="HAMAP-Rule" id="MF_01366"/>
    </source>
</evidence>
<evidence type="ECO:0000305" key="2"/>
<organism>
    <name type="scientific">Haloquadratum walsbyi (strain DSM 16790 / HBSQ001)</name>
    <dbReference type="NCBI Taxonomy" id="362976"/>
    <lineage>
        <taxon>Archaea</taxon>
        <taxon>Methanobacteriati</taxon>
        <taxon>Methanobacteriota</taxon>
        <taxon>Stenosarchaea group</taxon>
        <taxon>Halobacteria</taxon>
        <taxon>Halobacteriales</taxon>
        <taxon>Haloferacaceae</taxon>
        <taxon>Haloquadratum</taxon>
    </lineage>
</organism>
<name>RL13_HALWD</name>